<organism>
    <name type="scientific">Mus musculus</name>
    <name type="common">Mouse</name>
    <dbReference type="NCBI Taxonomy" id="10090"/>
    <lineage>
        <taxon>Eukaryota</taxon>
        <taxon>Metazoa</taxon>
        <taxon>Chordata</taxon>
        <taxon>Craniata</taxon>
        <taxon>Vertebrata</taxon>
        <taxon>Euteleostomi</taxon>
        <taxon>Mammalia</taxon>
        <taxon>Eutheria</taxon>
        <taxon>Euarchontoglires</taxon>
        <taxon>Glires</taxon>
        <taxon>Rodentia</taxon>
        <taxon>Myomorpha</taxon>
        <taxon>Muroidea</taxon>
        <taxon>Muridae</taxon>
        <taxon>Murinae</taxon>
        <taxon>Mus</taxon>
        <taxon>Mus</taxon>
    </lineage>
</organism>
<feature type="chain" id="PRO_0000055877" description="ORC ubiquitin ligase 1">
    <location>
        <begin position="1"/>
        <end position="722"/>
    </location>
</feature>
<feature type="zinc finger region" description="RING-type; degenerate" evidence="3">
    <location>
        <begin position="18"/>
        <end position="56"/>
    </location>
</feature>
<feature type="region of interest" description="Disordered" evidence="4">
    <location>
        <begin position="273"/>
        <end position="359"/>
    </location>
</feature>
<feature type="region of interest" description="Disordered" evidence="4">
    <location>
        <begin position="541"/>
        <end position="585"/>
    </location>
</feature>
<feature type="region of interest" description="Disordered" evidence="4">
    <location>
        <begin position="691"/>
        <end position="722"/>
    </location>
</feature>
<feature type="coiled-coil region" evidence="2">
    <location>
        <begin position="87"/>
        <end position="129"/>
    </location>
</feature>
<feature type="coiled-coil region" evidence="2">
    <location>
        <begin position="157"/>
        <end position="267"/>
    </location>
</feature>
<feature type="compositionally biased region" description="Low complexity" evidence="4">
    <location>
        <begin position="302"/>
        <end position="319"/>
    </location>
</feature>
<feature type="compositionally biased region" description="Polar residues" evidence="4">
    <location>
        <begin position="323"/>
        <end position="338"/>
    </location>
</feature>
<feature type="compositionally biased region" description="Basic and acidic residues" evidence="4">
    <location>
        <begin position="339"/>
        <end position="359"/>
    </location>
</feature>
<feature type="compositionally biased region" description="Polar residues" evidence="4">
    <location>
        <begin position="541"/>
        <end position="555"/>
    </location>
</feature>
<feature type="compositionally biased region" description="Basic and acidic residues" evidence="4">
    <location>
        <begin position="571"/>
        <end position="581"/>
    </location>
</feature>
<feature type="compositionally biased region" description="Polar residues" evidence="4">
    <location>
        <begin position="698"/>
        <end position="722"/>
    </location>
</feature>
<feature type="modified residue" description="Phosphoserine" evidence="1">
    <location>
        <position position="210"/>
    </location>
</feature>
<feature type="modified residue" description="Phosphoserine" evidence="1">
    <location>
        <position position="522"/>
    </location>
</feature>
<feature type="modified residue" description="Phosphoserine" evidence="8">
    <location>
        <position position="549"/>
    </location>
</feature>
<feature type="modified residue" description="Phosphoserine" evidence="1">
    <location>
        <position position="557"/>
    </location>
</feature>
<feature type="modified residue" description="Phosphoserine" evidence="8">
    <location>
        <position position="564"/>
    </location>
</feature>
<feature type="modified residue" description="Phosphoserine" evidence="8">
    <location>
        <position position="566"/>
    </location>
</feature>
<feature type="modified residue" description="Phosphoserine" evidence="1">
    <location>
        <position position="715"/>
    </location>
</feature>
<feature type="modified residue" description="Phosphoserine" evidence="1">
    <location>
        <position position="717"/>
    </location>
</feature>
<feature type="splice variant" id="VSP_015335" description="In isoform 2." evidence="5">
    <original>KF</original>
    <variation>NL</variation>
    <location>
        <begin position="213"/>
        <end position="214"/>
    </location>
</feature>
<feature type="splice variant" id="VSP_015337" description="In isoform 3." evidence="5">
    <original>FGRFTVAALQSKVEQYERE</original>
    <variation>YVPHTQSEAIATPMGCGSL</variation>
    <location>
        <begin position="214"/>
        <end position="232"/>
    </location>
</feature>
<feature type="splice variant" id="VSP_015336" description="In isoform 2." evidence="5">
    <location>
        <begin position="215"/>
        <end position="722"/>
    </location>
</feature>
<feature type="splice variant" id="VSP_015338" description="In isoform 3." evidence="5">
    <location>
        <begin position="233"/>
        <end position="722"/>
    </location>
</feature>
<sequence>MAQTVQNVTLSLTLPITCHICLGKVRQPVVCTNNHVFCSICIDLWLKNNSQCPACRVPITPENPCKEIIGGTSESEPMLSHTVRKHLRKTRLELLHREYEDEIDCLQKEVEELKSKNLSLESQIKTILDPLALMQGSQNEDKHPLADNPSKMDPDSVVEWKKKLRTANEIYEKVKDDVDKLKEANKKLKLENGGLLRENLRLKAEVDNRSPQKFGRFTVAALQSKVEQYERETNRLKKALERSDKYIEELESQVAHLKHSEEAKEDVDALCQRAPSADSKGPNGSDELGPPKNQSDSARKQAGSASASHLASPSSSRLADSGSVRQESTSRTEPNCPQNKDRYPKPTEPRLGARETPMDTYLEREWGSKPSDCAPYKEDELYGIPASCTPLSLSCLQLNTPENRENPVIKAGSSKKHANHLRKLVFDDFCDSPNACNNNSSEDDRRENEKKSDCFASSKTGFWDCCSTSYAQSLEFDGSEGNAIANSVGEIPSKLSEKSGSCLSKRLSCIRSLEMNRTRTSSEASMDAAYLDKISELDSMMSESDNSKSPCNNGFKSVEVEGPSKSPQGREFLEEPDKLQEGSKLNLSKPALTADGLESGGEWKPSSFFLLSPADHEMSEDFSLHSTSHSGTSEVKPPNCLFQTEFSQGALLSSSQGLFEDQRFGSSLFKISSEMQSLHSPLQSPWSAAFVPEKRSKNGNQSTKRKIQSSLANASPSKATKS</sequence>
<comment type="function">
    <text evidence="1">E3 ubiquitin ligase essential for DNA replication origin activation during S phase. Acts as a replication origin selector which selects the origins to be fired and catalyzes the multi-mono-ubiquitination of a subset of chromatin-bound ORC3 and ORC5 during S-phase.</text>
</comment>
<comment type="catalytic activity">
    <reaction evidence="1">
        <text>S-ubiquitinyl-[E2 ubiquitin-conjugating enzyme]-L-cysteine + [acceptor protein]-L-lysine = [E2 ubiquitin-conjugating enzyme]-L-cysteine + N(6)-ubiquitinyl-[acceptor protein]-L-lysine.</text>
        <dbReference type="EC" id="2.3.2.27"/>
    </reaction>
</comment>
<comment type="subunit">
    <text evidence="1">Associates with ORC complex. Binds to chromatin; association is cell cycle-regulated, absent from mitotic chromosomes, is associated with chromatin from G1 and partially released from chromatin from mid S-phase.</text>
</comment>
<comment type="subcellular location">
    <subcellularLocation>
        <location evidence="1">Chromosome</location>
    </subcellularLocation>
    <text evidence="1">Association to chromatin is cell cycle-regulated, absent from mitotic chromosomes, is associated with chromatin from G1 and partially released from chromatin from mid S-phase.</text>
</comment>
<comment type="alternative products">
    <event type="alternative splicing"/>
    <isoform>
        <id>Q8K2Y0-1</id>
        <name>1</name>
        <sequence type="displayed"/>
    </isoform>
    <isoform>
        <id>Q8K2Y0-2</id>
        <name>2</name>
        <sequence type="described" ref="VSP_015335 VSP_015336"/>
    </isoform>
    <isoform>
        <id>Q8K2Y0-3</id>
        <name>3</name>
        <sequence type="described" ref="VSP_015337 VSP_015338"/>
    </isoform>
</comment>
<comment type="PTM">
    <text evidence="1">Auto-ubiquitinated.</text>
</comment>
<comment type="sequence caution" evidence="6">
    <conflict type="erroneous initiation">
        <sequence resource="EMBL-CDS" id="AAH29231"/>
    </conflict>
    <text>Truncated N-terminus.</text>
</comment>
<accession>Q8K2Y0</accession>
<accession>Q9CYU1</accession>
<accession>Q9D1Y0</accession>
<reference key="1">
    <citation type="journal article" date="2005" name="Science">
        <title>The transcriptional landscape of the mammalian genome.</title>
        <authorList>
            <person name="Carninci P."/>
            <person name="Kasukawa T."/>
            <person name="Katayama S."/>
            <person name="Gough J."/>
            <person name="Frith M.C."/>
            <person name="Maeda N."/>
            <person name="Oyama R."/>
            <person name="Ravasi T."/>
            <person name="Lenhard B."/>
            <person name="Wells C."/>
            <person name="Kodzius R."/>
            <person name="Shimokawa K."/>
            <person name="Bajic V.B."/>
            <person name="Brenner S.E."/>
            <person name="Batalov S."/>
            <person name="Forrest A.R."/>
            <person name="Zavolan M."/>
            <person name="Davis M.J."/>
            <person name="Wilming L.G."/>
            <person name="Aidinis V."/>
            <person name="Allen J.E."/>
            <person name="Ambesi-Impiombato A."/>
            <person name="Apweiler R."/>
            <person name="Aturaliya R.N."/>
            <person name="Bailey T.L."/>
            <person name="Bansal M."/>
            <person name="Baxter L."/>
            <person name="Beisel K.W."/>
            <person name="Bersano T."/>
            <person name="Bono H."/>
            <person name="Chalk A.M."/>
            <person name="Chiu K.P."/>
            <person name="Choudhary V."/>
            <person name="Christoffels A."/>
            <person name="Clutterbuck D.R."/>
            <person name="Crowe M.L."/>
            <person name="Dalla E."/>
            <person name="Dalrymple B.P."/>
            <person name="de Bono B."/>
            <person name="Della Gatta G."/>
            <person name="di Bernardo D."/>
            <person name="Down T."/>
            <person name="Engstrom P."/>
            <person name="Fagiolini M."/>
            <person name="Faulkner G."/>
            <person name="Fletcher C.F."/>
            <person name="Fukushima T."/>
            <person name="Furuno M."/>
            <person name="Futaki S."/>
            <person name="Gariboldi M."/>
            <person name="Georgii-Hemming P."/>
            <person name="Gingeras T.R."/>
            <person name="Gojobori T."/>
            <person name="Green R.E."/>
            <person name="Gustincich S."/>
            <person name="Harbers M."/>
            <person name="Hayashi Y."/>
            <person name="Hensch T.K."/>
            <person name="Hirokawa N."/>
            <person name="Hill D."/>
            <person name="Huminiecki L."/>
            <person name="Iacono M."/>
            <person name="Ikeo K."/>
            <person name="Iwama A."/>
            <person name="Ishikawa T."/>
            <person name="Jakt M."/>
            <person name="Kanapin A."/>
            <person name="Katoh M."/>
            <person name="Kawasawa Y."/>
            <person name="Kelso J."/>
            <person name="Kitamura H."/>
            <person name="Kitano H."/>
            <person name="Kollias G."/>
            <person name="Krishnan S.P."/>
            <person name="Kruger A."/>
            <person name="Kummerfeld S.K."/>
            <person name="Kurochkin I.V."/>
            <person name="Lareau L.F."/>
            <person name="Lazarevic D."/>
            <person name="Lipovich L."/>
            <person name="Liu J."/>
            <person name="Liuni S."/>
            <person name="McWilliam S."/>
            <person name="Madan Babu M."/>
            <person name="Madera M."/>
            <person name="Marchionni L."/>
            <person name="Matsuda H."/>
            <person name="Matsuzawa S."/>
            <person name="Miki H."/>
            <person name="Mignone F."/>
            <person name="Miyake S."/>
            <person name="Morris K."/>
            <person name="Mottagui-Tabar S."/>
            <person name="Mulder N."/>
            <person name="Nakano N."/>
            <person name="Nakauchi H."/>
            <person name="Ng P."/>
            <person name="Nilsson R."/>
            <person name="Nishiguchi S."/>
            <person name="Nishikawa S."/>
            <person name="Nori F."/>
            <person name="Ohara O."/>
            <person name="Okazaki Y."/>
            <person name="Orlando V."/>
            <person name="Pang K.C."/>
            <person name="Pavan W.J."/>
            <person name="Pavesi G."/>
            <person name="Pesole G."/>
            <person name="Petrovsky N."/>
            <person name="Piazza S."/>
            <person name="Reed J."/>
            <person name="Reid J.F."/>
            <person name="Ring B.Z."/>
            <person name="Ringwald M."/>
            <person name="Rost B."/>
            <person name="Ruan Y."/>
            <person name="Salzberg S.L."/>
            <person name="Sandelin A."/>
            <person name="Schneider C."/>
            <person name="Schoenbach C."/>
            <person name="Sekiguchi K."/>
            <person name="Semple C.A."/>
            <person name="Seno S."/>
            <person name="Sessa L."/>
            <person name="Sheng Y."/>
            <person name="Shibata Y."/>
            <person name="Shimada H."/>
            <person name="Shimada K."/>
            <person name="Silva D."/>
            <person name="Sinclair B."/>
            <person name="Sperling S."/>
            <person name="Stupka E."/>
            <person name="Sugiura K."/>
            <person name="Sultana R."/>
            <person name="Takenaka Y."/>
            <person name="Taki K."/>
            <person name="Tammoja K."/>
            <person name="Tan S.L."/>
            <person name="Tang S."/>
            <person name="Taylor M.S."/>
            <person name="Tegner J."/>
            <person name="Teichmann S.A."/>
            <person name="Ueda H.R."/>
            <person name="van Nimwegen E."/>
            <person name="Verardo R."/>
            <person name="Wei C.L."/>
            <person name="Yagi K."/>
            <person name="Yamanishi H."/>
            <person name="Zabarovsky E."/>
            <person name="Zhu S."/>
            <person name="Zimmer A."/>
            <person name="Hide W."/>
            <person name="Bult C."/>
            <person name="Grimmond S.M."/>
            <person name="Teasdale R.D."/>
            <person name="Liu E.T."/>
            <person name="Brusic V."/>
            <person name="Quackenbush J."/>
            <person name="Wahlestedt C."/>
            <person name="Mattick J.S."/>
            <person name="Hume D.A."/>
            <person name="Kai C."/>
            <person name="Sasaki D."/>
            <person name="Tomaru Y."/>
            <person name="Fukuda S."/>
            <person name="Kanamori-Katayama M."/>
            <person name="Suzuki M."/>
            <person name="Aoki J."/>
            <person name="Arakawa T."/>
            <person name="Iida J."/>
            <person name="Imamura K."/>
            <person name="Itoh M."/>
            <person name="Kato T."/>
            <person name="Kawaji H."/>
            <person name="Kawagashira N."/>
            <person name="Kawashima T."/>
            <person name="Kojima M."/>
            <person name="Kondo S."/>
            <person name="Konno H."/>
            <person name="Nakano K."/>
            <person name="Ninomiya N."/>
            <person name="Nishio T."/>
            <person name="Okada M."/>
            <person name="Plessy C."/>
            <person name="Shibata K."/>
            <person name="Shiraki T."/>
            <person name="Suzuki S."/>
            <person name="Tagami M."/>
            <person name="Waki K."/>
            <person name="Watahiki A."/>
            <person name="Okamura-Oho Y."/>
            <person name="Suzuki H."/>
            <person name="Kawai J."/>
            <person name="Hayashizaki Y."/>
        </authorList>
    </citation>
    <scope>NUCLEOTIDE SEQUENCE [LARGE SCALE MRNA] (ISOFORMS 2 AND 3)</scope>
    <source>
        <strain>C57BL/6J</strain>
        <tissue>Embryo</tissue>
    </source>
</reference>
<reference key="2">
    <citation type="journal article" date="2004" name="Genome Res.">
        <title>The status, quality, and expansion of the NIH full-length cDNA project: the Mammalian Gene Collection (MGC).</title>
        <authorList>
            <consortium name="The MGC Project Team"/>
        </authorList>
    </citation>
    <scope>NUCLEOTIDE SEQUENCE [LARGE SCALE MRNA] (ISOFORM 1)</scope>
    <source>
        <strain>FVB/N</strain>
        <tissue>Mammary tumor</tissue>
    </source>
</reference>
<reference key="3">
    <citation type="journal article" date="2010" name="Cell">
        <title>A tissue-specific atlas of mouse protein phosphorylation and expression.</title>
        <authorList>
            <person name="Huttlin E.L."/>
            <person name="Jedrychowski M.P."/>
            <person name="Elias J.E."/>
            <person name="Goswami T."/>
            <person name="Rad R."/>
            <person name="Beausoleil S.A."/>
            <person name="Villen J."/>
            <person name="Haas W."/>
            <person name="Sowa M.E."/>
            <person name="Gygi S.P."/>
        </authorList>
    </citation>
    <scope>PHOSPHORYLATION [LARGE SCALE ANALYSIS] AT SER-549; SER-564 AND SER-566</scope>
    <scope>IDENTIFICATION BY MASS SPECTROMETRY [LARGE SCALE ANALYSIS]</scope>
    <source>
        <tissue>Lung</tissue>
        <tissue>Spleen</tissue>
        <tissue>Testis</tissue>
    </source>
</reference>
<protein>
    <recommendedName>
        <fullName evidence="6">ORC ubiquitin ligase 1</fullName>
        <shortName>OBI1</shortName>
        <ecNumber evidence="1">2.3.2.27</ecNumber>
    </recommendedName>
    <alternativeName>
        <fullName>RING finger protein 219</fullName>
    </alternativeName>
</protein>
<evidence type="ECO:0000250" key="1">
    <source>
        <dbReference type="UniProtKB" id="Q5W0B1"/>
    </source>
</evidence>
<evidence type="ECO:0000255" key="2"/>
<evidence type="ECO:0000255" key="3">
    <source>
        <dbReference type="PROSITE-ProRule" id="PRU00175"/>
    </source>
</evidence>
<evidence type="ECO:0000256" key="4">
    <source>
        <dbReference type="SAM" id="MobiDB-lite"/>
    </source>
</evidence>
<evidence type="ECO:0000303" key="5">
    <source>
    </source>
</evidence>
<evidence type="ECO:0000305" key="6"/>
<evidence type="ECO:0000312" key="7">
    <source>
        <dbReference type="MGI" id="MGI:1919736"/>
    </source>
</evidence>
<evidence type="ECO:0007744" key="8">
    <source>
    </source>
</evidence>
<proteinExistence type="evidence at protein level"/>
<dbReference type="EC" id="2.3.2.27" evidence="1"/>
<dbReference type="EMBL" id="AK013314">
    <property type="protein sequence ID" value="BAB28786.1"/>
    <property type="molecule type" value="mRNA"/>
</dbReference>
<dbReference type="EMBL" id="AK020974">
    <property type="protein sequence ID" value="BAB32265.1"/>
    <property type="molecule type" value="mRNA"/>
</dbReference>
<dbReference type="EMBL" id="BC029231">
    <property type="protein sequence ID" value="AAH29231.1"/>
    <property type="status" value="ALT_INIT"/>
    <property type="molecule type" value="mRNA"/>
</dbReference>
<dbReference type="CCDS" id="CCDS27320.1">
    <molecule id="Q8K2Y0-1"/>
</dbReference>
<dbReference type="RefSeq" id="XP_011243508.1">
    <molecule id="Q8K2Y0-2"/>
    <property type="nucleotide sequence ID" value="XM_011245206.3"/>
</dbReference>
<dbReference type="SMR" id="Q8K2Y0"/>
<dbReference type="FunCoup" id="Q8K2Y0">
    <property type="interactions" value="1355"/>
</dbReference>
<dbReference type="IntAct" id="Q8K2Y0">
    <property type="interactions" value="1"/>
</dbReference>
<dbReference type="STRING" id="10090.ENSMUSP00000022716"/>
<dbReference type="GlyGen" id="Q8K2Y0">
    <property type="glycosylation" value="2 sites, 2 N-linked glycans (2 sites)"/>
</dbReference>
<dbReference type="iPTMnet" id="Q8K2Y0"/>
<dbReference type="PhosphoSitePlus" id="Q8K2Y0"/>
<dbReference type="jPOST" id="Q8K2Y0"/>
<dbReference type="PaxDb" id="10090-ENSMUSP00000022716"/>
<dbReference type="ProteomicsDB" id="300544">
    <molecule id="Q8K2Y0-1"/>
</dbReference>
<dbReference type="ProteomicsDB" id="300545">
    <molecule id="Q8K2Y0-2"/>
</dbReference>
<dbReference type="ProteomicsDB" id="300546">
    <molecule id="Q8K2Y0-3"/>
</dbReference>
<dbReference type="Pumba" id="Q8K2Y0"/>
<dbReference type="Antibodypedia" id="24695">
    <property type="antibodies" value="156 antibodies from 22 providers"/>
</dbReference>
<dbReference type="DNASU" id="72486"/>
<dbReference type="Ensembl" id="ENSMUST00000228448.2">
    <molecule id="Q8K2Y0-2"/>
    <property type="protein sequence ID" value="ENSMUSP00000154655.2"/>
    <property type="gene ID" value="ENSMUSG00000022120.5"/>
</dbReference>
<dbReference type="GeneID" id="72486"/>
<dbReference type="UCSC" id="uc007uxd.1">
    <molecule id="Q8K2Y0-3"/>
    <property type="organism name" value="mouse"/>
</dbReference>
<dbReference type="UCSC" id="uc007uxe.1">
    <molecule id="Q8K2Y0-2"/>
    <property type="organism name" value="mouse"/>
</dbReference>
<dbReference type="AGR" id="MGI:1919736"/>
<dbReference type="CTD" id="79596"/>
<dbReference type="MGI" id="MGI:1919736">
    <property type="gene designation" value="Obi1"/>
</dbReference>
<dbReference type="VEuPathDB" id="HostDB:ENSMUSG00000022120"/>
<dbReference type="eggNOG" id="ENOG502QTFT">
    <property type="taxonomic scope" value="Eukaryota"/>
</dbReference>
<dbReference type="GeneTree" id="ENSGT00390000013512"/>
<dbReference type="InParanoid" id="Q8K2Y0"/>
<dbReference type="OrthoDB" id="6105938at2759"/>
<dbReference type="PhylomeDB" id="Q8K2Y0"/>
<dbReference type="BioGRID-ORCS" id="72486">
    <property type="hits" value="2 hits in 78 CRISPR screens"/>
</dbReference>
<dbReference type="PRO" id="PR:Q8K2Y0"/>
<dbReference type="Proteomes" id="UP000000589">
    <property type="component" value="Chromosome 14"/>
</dbReference>
<dbReference type="RNAct" id="Q8K2Y0">
    <property type="molecule type" value="protein"/>
</dbReference>
<dbReference type="Bgee" id="ENSMUSG00000022120">
    <property type="expression patterns" value="Expressed in lumbar dorsal root ganglion and 218 other cell types or tissues"/>
</dbReference>
<dbReference type="ExpressionAtlas" id="Q8K2Y0">
    <property type="expression patterns" value="baseline and differential"/>
</dbReference>
<dbReference type="GO" id="GO:0000785">
    <property type="term" value="C:chromatin"/>
    <property type="evidence" value="ECO:0000250"/>
    <property type="project" value="UniProtKB"/>
</dbReference>
<dbReference type="GO" id="GO:0003682">
    <property type="term" value="F:chromatin binding"/>
    <property type="evidence" value="ECO:0000250"/>
    <property type="project" value="UniProtKB"/>
</dbReference>
<dbReference type="GO" id="GO:0004842">
    <property type="term" value="F:ubiquitin-protein transferase activity"/>
    <property type="evidence" value="ECO:0000250"/>
    <property type="project" value="UniProtKB"/>
</dbReference>
<dbReference type="GO" id="GO:0008270">
    <property type="term" value="F:zinc ion binding"/>
    <property type="evidence" value="ECO:0007669"/>
    <property type="project" value="UniProtKB-KW"/>
</dbReference>
<dbReference type="GO" id="GO:0048026">
    <property type="term" value="P:positive regulation of mRNA splicing, via spliceosome"/>
    <property type="evidence" value="ECO:0000315"/>
    <property type="project" value="MGI"/>
</dbReference>
<dbReference type="GO" id="GO:0051865">
    <property type="term" value="P:protein autoubiquitination"/>
    <property type="evidence" value="ECO:0000250"/>
    <property type="project" value="UniProtKB"/>
</dbReference>
<dbReference type="GO" id="GO:0006513">
    <property type="term" value="P:protein monoubiquitination"/>
    <property type="evidence" value="ECO:0000250"/>
    <property type="project" value="UniProtKB"/>
</dbReference>
<dbReference type="GO" id="GO:0006275">
    <property type="term" value="P:regulation of DNA replication"/>
    <property type="evidence" value="ECO:0000250"/>
    <property type="project" value="UniProtKB"/>
</dbReference>
<dbReference type="CDD" id="cd16562">
    <property type="entry name" value="RING-HC_RNF219"/>
    <property type="match status" value="1"/>
</dbReference>
<dbReference type="Gene3D" id="3.30.40.10">
    <property type="entry name" value="Zinc/RING finger domain, C3HC4 (zinc finger)"/>
    <property type="match status" value="1"/>
</dbReference>
<dbReference type="InterPro" id="IPR039209">
    <property type="entry name" value="OBI1"/>
</dbReference>
<dbReference type="InterPro" id="IPR035691">
    <property type="entry name" value="OBI1_RING-HC"/>
</dbReference>
<dbReference type="InterPro" id="IPR001841">
    <property type="entry name" value="Znf_RING"/>
</dbReference>
<dbReference type="InterPro" id="IPR013083">
    <property type="entry name" value="Znf_RING/FYVE/PHD"/>
</dbReference>
<dbReference type="PANTHER" id="PTHR14609:SF1">
    <property type="entry name" value="ORC UBIQUITIN LIGASE 1"/>
    <property type="match status" value="1"/>
</dbReference>
<dbReference type="PANTHER" id="PTHR14609">
    <property type="entry name" value="RING FINGER PROTEIN 219"/>
    <property type="match status" value="1"/>
</dbReference>
<dbReference type="Pfam" id="PF13923">
    <property type="entry name" value="zf-C3HC4_2"/>
    <property type="match status" value="1"/>
</dbReference>
<dbReference type="SMART" id="SM00184">
    <property type="entry name" value="RING"/>
    <property type="match status" value="1"/>
</dbReference>
<dbReference type="SUPFAM" id="SSF57850">
    <property type="entry name" value="RING/U-box"/>
    <property type="match status" value="1"/>
</dbReference>
<dbReference type="PROSITE" id="PS50089">
    <property type="entry name" value="ZF_RING_2"/>
    <property type="match status" value="1"/>
</dbReference>
<name>OBI1_MOUSE</name>
<keyword id="KW-0025">Alternative splicing</keyword>
<keyword id="KW-0158">Chromosome</keyword>
<keyword id="KW-0175">Coiled coil</keyword>
<keyword id="KW-0479">Metal-binding</keyword>
<keyword id="KW-0597">Phosphoprotein</keyword>
<keyword id="KW-1185">Reference proteome</keyword>
<keyword id="KW-0808">Transferase</keyword>
<keyword id="KW-0832">Ubl conjugation</keyword>
<keyword id="KW-0833">Ubl conjugation pathway</keyword>
<keyword id="KW-0862">Zinc</keyword>
<keyword id="KW-0863">Zinc-finger</keyword>
<gene>
    <name evidence="7" type="primary">Obi1</name>
    <name evidence="7" type="synonym">Rnf219</name>
</gene>